<evidence type="ECO:0000250" key="1"/>
<evidence type="ECO:0000255" key="2"/>
<evidence type="ECO:0000303" key="3">
    <source ref="3"/>
</evidence>
<evidence type="ECO:0000305" key="4"/>
<organism>
    <name type="scientific">Arabidopsis thaliana</name>
    <name type="common">Mouse-ear cress</name>
    <dbReference type="NCBI Taxonomy" id="3702"/>
    <lineage>
        <taxon>Eukaryota</taxon>
        <taxon>Viridiplantae</taxon>
        <taxon>Streptophyta</taxon>
        <taxon>Embryophyta</taxon>
        <taxon>Tracheophyta</taxon>
        <taxon>Spermatophyta</taxon>
        <taxon>Magnoliopsida</taxon>
        <taxon>eudicotyledons</taxon>
        <taxon>Gunneridae</taxon>
        <taxon>Pentapetalae</taxon>
        <taxon>rosids</taxon>
        <taxon>malvids</taxon>
        <taxon>Brassicales</taxon>
        <taxon>Brassicaceae</taxon>
        <taxon>Camelineae</taxon>
        <taxon>Arabidopsis</taxon>
    </lineage>
</organism>
<reference key="1">
    <citation type="journal article" date="2000" name="Nature">
        <title>Sequence and analysis of chromosome 1 of the plant Arabidopsis thaliana.</title>
        <authorList>
            <person name="Theologis A."/>
            <person name="Ecker J.R."/>
            <person name="Palm C.J."/>
            <person name="Federspiel N.A."/>
            <person name="Kaul S."/>
            <person name="White O."/>
            <person name="Alonso J."/>
            <person name="Altafi H."/>
            <person name="Araujo R."/>
            <person name="Bowman C.L."/>
            <person name="Brooks S.Y."/>
            <person name="Buehler E."/>
            <person name="Chan A."/>
            <person name="Chao Q."/>
            <person name="Chen H."/>
            <person name="Cheuk R.F."/>
            <person name="Chin C.W."/>
            <person name="Chung M.K."/>
            <person name="Conn L."/>
            <person name="Conway A.B."/>
            <person name="Conway A.R."/>
            <person name="Creasy T.H."/>
            <person name="Dewar K."/>
            <person name="Dunn P."/>
            <person name="Etgu P."/>
            <person name="Feldblyum T.V."/>
            <person name="Feng J.-D."/>
            <person name="Fong B."/>
            <person name="Fujii C.Y."/>
            <person name="Gill J.E."/>
            <person name="Goldsmith A.D."/>
            <person name="Haas B."/>
            <person name="Hansen N.F."/>
            <person name="Hughes B."/>
            <person name="Huizar L."/>
            <person name="Hunter J.L."/>
            <person name="Jenkins J."/>
            <person name="Johnson-Hopson C."/>
            <person name="Khan S."/>
            <person name="Khaykin E."/>
            <person name="Kim C.J."/>
            <person name="Koo H.L."/>
            <person name="Kremenetskaia I."/>
            <person name="Kurtz D.B."/>
            <person name="Kwan A."/>
            <person name="Lam B."/>
            <person name="Langin-Hooper S."/>
            <person name="Lee A."/>
            <person name="Lee J.M."/>
            <person name="Lenz C.A."/>
            <person name="Li J.H."/>
            <person name="Li Y.-P."/>
            <person name="Lin X."/>
            <person name="Liu S.X."/>
            <person name="Liu Z.A."/>
            <person name="Luros J.S."/>
            <person name="Maiti R."/>
            <person name="Marziali A."/>
            <person name="Militscher J."/>
            <person name="Miranda M."/>
            <person name="Nguyen M."/>
            <person name="Nierman W.C."/>
            <person name="Osborne B.I."/>
            <person name="Pai G."/>
            <person name="Peterson J."/>
            <person name="Pham P.K."/>
            <person name="Rizzo M."/>
            <person name="Rooney T."/>
            <person name="Rowley D."/>
            <person name="Sakano H."/>
            <person name="Salzberg S.L."/>
            <person name="Schwartz J.R."/>
            <person name="Shinn P."/>
            <person name="Southwick A.M."/>
            <person name="Sun H."/>
            <person name="Tallon L.J."/>
            <person name="Tambunga G."/>
            <person name="Toriumi M.J."/>
            <person name="Town C.D."/>
            <person name="Utterback T."/>
            <person name="Van Aken S."/>
            <person name="Vaysberg M."/>
            <person name="Vysotskaia V.S."/>
            <person name="Walker M."/>
            <person name="Wu D."/>
            <person name="Yu G."/>
            <person name="Fraser C.M."/>
            <person name="Venter J.C."/>
            <person name="Davis R.W."/>
        </authorList>
    </citation>
    <scope>NUCLEOTIDE SEQUENCE [LARGE SCALE GENOMIC DNA]</scope>
    <source>
        <strain>cv. Columbia</strain>
    </source>
</reference>
<reference key="2">
    <citation type="journal article" date="2017" name="Plant J.">
        <title>Araport11: a complete reannotation of the Arabidopsis thaliana reference genome.</title>
        <authorList>
            <person name="Cheng C.Y."/>
            <person name="Krishnakumar V."/>
            <person name="Chan A.P."/>
            <person name="Thibaud-Nissen F."/>
            <person name="Schobel S."/>
            <person name="Town C.D."/>
        </authorList>
    </citation>
    <scope>GENOME REANNOTATION</scope>
    <source>
        <strain>cv. Columbia</strain>
    </source>
</reference>
<reference key="3">
    <citation type="submission" date="2004-09" db="EMBL/GenBank/DDBJ databases">
        <title>Large-scale analysis of RIKEN Arabidopsis full-length (RAFL) cDNAs.</title>
        <authorList>
            <person name="Totoki Y."/>
            <person name="Seki M."/>
            <person name="Ishida J."/>
            <person name="Nakajima M."/>
            <person name="Enju A."/>
            <person name="Kamiya A."/>
            <person name="Narusaka M."/>
            <person name="Shin-i T."/>
            <person name="Nakagawa M."/>
            <person name="Sakamoto N."/>
            <person name="Oishi K."/>
            <person name="Kohara Y."/>
            <person name="Kobayashi M."/>
            <person name="Toyoda A."/>
            <person name="Sakaki Y."/>
            <person name="Sakurai T."/>
            <person name="Iida K."/>
            <person name="Akiyama K."/>
            <person name="Satou M."/>
            <person name="Toyoda T."/>
            <person name="Konagaya A."/>
            <person name="Carninci P."/>
            <person name="Kawai J."/>
            <person name="Hayashizaki Y."/>
            <person name="Shinozaki K."/>
        </authorList>
    </citation>
    <scope>NUCLEOTIDE SEQUENCE [LARGE SCALE MRNA] (ISOFORM 2)</scope>
    <source>
        <strain>cv. Columbia</strain>
    </source>
</reference>
<reference key="4">
    <citation type="submission" date="2004-12" db="EMBL/GenBank/DDBJ databases">
        <title>Arabidopsis ORF clones.</title>
        <authorList>
            <person name="Shinn P."/>
            <person name="Chen H."/>
            <person name="Cheuk R.F."/>
            <person name="Kim C.J."/>
            <person name="Ecker J.R."/>
        </authorList>
    </citation>
    <scope>NUCLEOTIDE SEQUENCE [LARGE SCALE MRNA] (ISOFORM 1)</scope>
    <source>
        <strain>cv. Columbia</strain>
    </source>
</reference>
<gene>
    <name type="ordered locus">At1g78910</name>
    <name type="ORF">F9K20.4</name>
</gene>
<accession>Q5XET6</accession>
<accession>Q67Z99</accession>
<accession>Q9ZVA9</accession>
<keyword id="KW-0025">Alternative splicing</keyword>
<keyword id="KW-0413">Isomerase</keyword>
<keyword id="KW-0496">Mitochondrion</keyword>
<keyword id="KW-1185">Reference proteome</keyword>
<keyword id="KW-0694">RNA-binding</keyword>
<keyword id="KW-0809">Transit peptide</keyword>
<dbReference type="EC" id="5.4.99.-"/>
<dbReference type="EMBL" id="AC005679">
    <property type="protein sequence ID" value="AAC83020.1"/>
    <property type="status" value="ALT_SEQ"/>
    <property type="molecule type" value="Genomic_DNA"/>
</dbReference>
<dbReference type="EMBL" id="CP002684">
    <property type="protein sequence ID" value="AEE36173.1"/>
    <property type="molecule type" value="Genomic_DNA"/>
</dbReference>
<dbReference type="EMBL" id="AK176219">
    <property type="protein sequence ID" value="BAD43982.1"/>
    <property type="molecule type" value="mRNA"/>
</dbReference>
<dbReference type="EMBL" id="BT015880">
    <property type="protein sequence ID" value="AAU95416.1"/>
    <property type="molecule type" value="mRNA"/>
</dbReference>
<dbReference type="EMBL" id="BT020453">
    <property type="protein sequence ID" value="AAW30031.1"/>
    <property type="molecule type" value="mRNA"/>
</dbReference>
<dbReference type="PIR" id="F96818">
    <property type="entry name" value="F96818"/>
</dbReference>
<dbReference type="RefSeq" id="NP_178012.2">
    <molecule id="Q5XET6-1"/>
    <property type="nucleotide sequence ID" value="NM_106540.3"/>
</dbReference>
<dbReference type="FunCoup" id="Q5XET6">
    <property type="interactions" value="2677"/>
</dbReference>
<dbReference type="STRING" id="3702.Q5XET6"/>
<dbReference type="PaxDb" id="3702-AT1G78910.1"/>
<dbReference type="ProteomicsDB" id="226461">
    <molecule id="Q5XET6-1"/>
</dbReference>
<dbReference type="EnsemblPlants" id="AT1G78910.1">
    <molecule id="Q5XET6-1"/>
    <property type="protein sequence ID" value="AT1G78910.1"/>
    <property type="gene ID" value="AT1G78910"/>
</dbReference>
<dbReference type="GeneID" id="844229"/>
<dbReference type="Gramene" id="AT1G78910.1">
    <molecule id="Q5XET6-1"/>
    <property type="protein sequence ID" value="AT1G78910.1"/>
    <property type="gene ID" value="AT1G78910"/>
</dbReference>
<dbReference type="KEGG" id="ath:AT1G78910"/>
<dbReference type="Araport" id="AT1G78910"/>
<dbReference type="TAIR" id="AT1G78910"/>
<dbReference type="eggNOG" id="KOG1919">
    <property type="taxonomic scope" value="Eukaryota"/>
</dbReference>
<dbReference type="HOGENOM" id="CLU_016902_13_0_1"/>
<dbReference type="InParanoid" id="Q5XET6"/>
<dbReference type="PhylomeDB" id="Q5XET6"/>
<dbReference type="BioCyc" id="ARA:AT1G78910-MONOMER"/>
<dbReference type="PRO" id="PR:Q5XET6"/>
<dbReference type="Proteomes" id="UP000006548">
    <property type="component" value="Chromosome 1"/>
</dbReference>
<dbReference type="ExpressionAtlas" id="Q5XET6">
    <property type="expression patterns" value="baseline and differential"/>
</dbReference>
<dbReference type="GO" id="GO:0005739">
    <property type="term" value="C:mitochondrion"/>
    <property type="evidence" value="ECO:0007669"/>
    <property type="project" value="UniProtKB-SubCell"/>
</dbReference>
<dbReference type="GO" id="GO:0009982">
    <property type="term" value="F:pseudouridine synthase activity"/>
    <property type="evidence" value="ECO:0000304"/>
    <property type="project" value="TAIR"/>
</dbReference>
<dbReference type="GO" id="GO:0003723">
    <property type="term" value="F:RNA binding"/>
    <property type="evidence" value="ECO:0007669"/>
    <property type="project" value="UniProtKB-KW"/>
</dbReference>
<dbReference type="GO" id="GO:0001522">
    <property type="term" value="P:pseudouridine synthesis"/>
    <property type="evidence" value="ECO:0007669"/>
    <property type="project" value="InterPro"/>
</dbReference>
<dbReference type="CDD" id="cd02869">
    <property type="entry name" value="PseudoU_synth_RluA_like"/>
    <property type="match status" value="1"/>
</dbReference>
<dbReference type="Gene3D" id="3.30.2350.10">
    <property type="entry name" value="Pseudouridine synthase"/>
    <property type="match status" value="1"/>
</dbReference>
<dbReference type="InterPro" id="IPR020103">
    <property type="entry name" value="PsdUridine_synth_cat_dom_sf"/>
</dbReference>
<dbReference type="InterPro" id="IPR006224">
    <property type="entry name" value="PsdUridine_synth_RluA-like_CS"/>
</dbReference>
<dbReference type="InterPro" id="IPR006145">
    <property type="entry name" value="PsdUridine_synth_RsuA/RluA"/>
</dbReference>
<dbReference type="InterPro" id="IPR050188">
    <property type="entry name" value="RluA_PseudoU_synthase"/>
</dbReference>
<dbReference type="PANTHER" id="PTHR21600">
    <property type="entry name" value="MITOCHONDRIAL RNA PSEUDOURIDINE SYNTHASE"/>
    <property type="match status" value="1"/>
</dbReference>
<dbReference type="PANTHER" id="PTHR21600:SF53">
    <property type="entry name" value="RNA PSEUDOURIDINE SYNTHASE 3, MITOCHONDRIAL"/>
    <property type="match status" value="1"/>
</dbReference>
<dbReference type="Pfam" id="PF00849">
    <property type="entry name" value="PseudoU_synth_2"/>
    <property type="match status" value="1"/>
</dbReference>
<dbReference type="SUPFAM" id="SSF55120">
    <property type="entry name" value="Pseudouridine synthase"/>
    <property type="match status" value="1"/>
</dbReference>
<dbReference type="PROSITE" id="PS01129">
    <property type="entry name" value="PSI_RLU"/>
    <property type="match status" value="1"/>
</dbReference>
<name>PUS3_ARATH</name>
<protein>
    <recommendedName>
        <fullName>RNA pseudouridine synthase 3, mitochondrial</fullName>
        <ecNumber>5.4.99.-</ecNumber>
    </recommendedName>
    <alternativeName>
        <fullName>RNA pseudouridylate synthase 3</fullName>
    </alternativeName>
    <alternativeName>
        <fullName>RNA-uridine isomerase 3</fullName>
    </alternativeName>
</protein>
<proteinExistence type="evidence at transcript level"/>
<sequence length="478" mass="53801">MWKAKTCFRQIYLTVLIRRYSRVAPPPSSVIRVTNNVAHLGPPKQGPLPRQLISLPPFPGHPLPGKNAGADGDDGDSGGHVTAISWVKYYFEEIYDKAIQTHFTKGLVQMEFRGRRDASREKEDGAIPMRKIKHNEVMQIGDKIWLPVSIAEMRISKRYDTIPSGTLYPNADEIAYLQRLVRFKDSAIIVLNKPPKLPVKGNVPIHNSMDALAAAALSFGNDEGPRLVHRLDRETSGLLVMGRTKESIDYLHSVFSDYKGRNSSCKAWNKACEAMYQQYWALVIGSPKEKEGLISAPLSKVLLDDGKTDRVVLAQGSGFEASQDAITEYKVLGPKINGCSWVELRPITSRKHQLRVHCAEALGTPIVGDYKYGWFVHKRWKQMPQVDIEPTTGKPYKLRRPEGLDVQKGSVLSKVPLLHLHCREMVLPNIAKFLHVMNQQETEPLHTGIIDKPDLLRFVASMPSHMKISWNLMSSYLV</sequence>
<comment type="catalytic activity">
    <reaction>
        <text>a uridine in RNA = a pseudouridine in RNA</text>
        <dbReference type="Rhea" id="RHEA:48348"/>
        <dbReference type="Rhea" id="RHEA-COMP:12068"/>
        <dbReference type="Rhea" id="RHEA-COMP:12069"/>
        <dbReference type="ChEBI" id="CHEBI:65314"/>
        <dbReference type="ChEBI" id="CHEBI:65315"/>
    </reaction>
</comment>
<comment type="subcellular location">
    <subcellularLocation>
        <location evidence="4">Mitochondrion</location>
    </subcellularLocation>
</comment>
<comment type="alternative products">
    <event type="alternative splicing"/>
    <isoform>
        <id>Q5XET6-1</id>
        <name>1</name>
        <sequence type="displayed"/>
    </isoform>
    <isoform>
        <id>Q5XET6-2</id>
        <name>2</name>
        <sequence type="described" ref="VSP_037035"/>
    </isoform>
</comment>
<comment type="miscellaneous">
    <molecule>Isoform 2</molecule>
    <text evidence="4">May be due to a competing acceptor splice site.</text>
</comment>
<comment type="similarity">
    <text evidence="4">Belongs to the pseudouridine synthase RluA family.</text>
</comment>
<comment type="sequence caution" evidence="4">
    <conflict type="erroneous gene model prediction">
        <sequence resource="EMBL-CDS" id="AAC83020"/>
    </conflict>
</comment>
<feature type="transit peptide" description="Mitochondrion" evidence="2">
    <location>
        <begin position="1"/>
        <end position="20"/>
    </location>
</feature>
<feature type="chain" id="PRO_0000371423" description="RNA pseudouridine synthase 3, mitochondrial">
    <location>
        <begin position="21"/>
        <end position="478"/>
    </location>
</feature>
<feature type="domain" description="S4 RNA-binding">
    <location>
        <begin position="92"/>
        <end position="162"/>
    </location>
</feature>
<feature type="active site" evidence="1">
    <location>
        <position position="232"/>
    </location>
</feature>
<feature type="splice variant" id="VSP_037035" description="In isoform 2." evidence="3">
    <location>
        <begin position="1"/>
        <end position="152"/>
    </location>
</feature>